<reference key="1">
    <citation type="journal article" date="1991" name="FEBS Lett.">
        <title>Extended N-terminal sequencing of proteins of the large ribosomal subunit from yeast mitochondria.</title>
        <authorList>
            <person name="Grohmann L."/>
            <person name="Graack H.-R."/>
            <person name="Kruft V."/>
            <person name="Choli T."/>
            <person name="Goldschmidt-Reisin S."/>
            <person name="Kitakawa M."/>
        </authorList>
    </citation>
    <scope>PROTEIN SEQUENCE</scope>
    <scope>SUBCELLULAR LOCATION</scope>
    <source>
        <strain>07173</strain>
    </source>
</reference>
<name>YLM1_YEASX</name>
<organism>
    <name type="scientific">Saccharomyces cerevisiae</name>
    <name type="common">Baker's yeast</name>
    <dbReference type="NCBI Taxonomy" id="4932"/>
    <lineage>
        <taxon>Eukaryota</taxon>
        <taxon>Fungi</taxon>
        <taxon>Dikarya</taxon>
        <taxon>Ascomycota</taxon>
        <taxon>Saccharomycotina</taxon>
        <taxon>Saccharomycetes</taxon>
        <taxon>Saccharomycetales</taxon>
        <taxon>Saccharomycetaceae</taxon>
        <taxon>Saccharomyces</taxon>
    </lineage>
</organism>
<protein>
    <recommendedName>
        <fullName evidence="2">Putative large ribosomal subunit protein YmL1</fullName>
    </recommendedName>
    <alternativeName>
        <fullName>54S ribosomal protein L1, mitochondrial</fullName>
    </alternativeName>
</protein>
<dbReference type="PIR" id="S17255">
    <property type="entry name" value="S17255"/>
</dbReference>
<dbReference type="GO" id="GO:0005739">
    <property type="term" value="C:mitochondrion"/>
    <property type="evidence" value="ECO:0007669"/>
    <property type="project" value="UniProtKB-SubCell"/>
</dbReference>
<dbReference type="GO" id="GO:1990904">
    <property type="term" value="C:ribonucleoprotein complex"/>
    <property type="evidence" value="ECO:0007669"/>
    <property type="project" value="UniProtKB-KW"/>
</dbReference>
<dbReference type="GO" id="GO:0005840">
    <property type="term" value="C:ribosome"/>
    <property type="evidence" value="ECO:0007669"/>
    <property type="project" value="UniProtKB-KW"/>
</dbReference>
<sequence length="4" mass="402">SVTP</sequence>
<proteinExistence type="evidence at protein level"/>
<comment type="function">
    <text>Putative component of the large subunit of mitochondrial ribosome.</text>
</comment>
<comment type="subcellular location">
    <subcellularLocation>
        <location evidence="1">Mitochondrion</location>
    </subcellularLocation>
</comment>
<accession>P36515</accession>
<feature type="chain" id="PRO_0000087688" description="Putative large ribosomal subunit protein YmL1">
    <location>
        <begin position="1"/>
        <end position="4" status="greater than"/>
    </location>
</feature>
<feature type="non-terminal residue">
    <location>
        <position position="4"/>
    </location>
</feature>
<evidence type="ECO:0000269" key="1">
    <source>
    </source>
</evidence>
<evidence type="ECO:0000303" key="2">
    <source>
    </source>
</evidence>
<keyword id="KW-0903">Direct protein sequencing</keyword>
<keyword id="KW-0496">Mitochondrion</keyword>
<keyword id="KW-0687">Ribonucleoprotein</keyword>
<keyword id="KW-0689">Ribosomal protein</keyword>